<sequence length="291" mass="29897">MLTVRAPATSANLGSGFDVFGVALERPADVVRLEKADRVTIDVTGAGSQYIPEDPDKNTVGAVADALDAPARIQIDKGVRPASGLGSSAASAAAAAVGLNELYDRGYSREELVPIAAKGEAVVSGDAHDDNVAPSIMGGFTIATDKGVTQVDADIPLVACLPDIVVSTRDARNVVPETARVDQMVETVGNAASLTTGMHRDDPELVGQGMHDTVVTPARAKLIDGYEQVREAALAAGATGVTISGAGPTVIAACAEEDRRQIASTMLDAFGERGVDARVYQTRIGGGAEVF</sequence>
<accession>Q5UXG4</accession>
<gene>
    <name evidence="1" type="primary">thrB</name>
    <name type="ordered locus">rrnAC3348</name>
</gene>
<evidence type="ECO:0000255" key="1">
    <source>
        <dbReference type="HAMAP-Rule" id="MF_00384"/>
    </source>
</evidence>
<evidence type="ECO:0000305" key="2"/>
<dbReference type="EC" id="2.7.1.39" evidence="1"/>
<dbReference type="EMBL" id="AY596297">
    <property type="protein sequence ID" value="AAV48039.1"/>
    <property type="status" value="ALT_INIT"/>
    <property type="molecule type" value="Genomic_DNA"/>
</dbReference>
<dbReference type="RefSeq" id="WP_049939103.1">
    <property type="nucleotide sequence ID" value="NC_006396.1"/>
</dbReference>
<dbReference type="SMR" id="Q5UXG4"/>
<dbReference type="STRING" id="272569.rrnAC3348"/>
<dbReference type="PaxDb" id="272569-rrnAC3348"/>
<dbReference type="EnsemblBacteria" id="AAV48039">
    <property type="protein sequence ID" value="AAV48039"/>
    <property type="gene ID" value="rrnAC3348"/>
</dbReference>
<dbReference type="GeneID" id="40154143"/>
<dbReference type="KEGG" id="hma:rrnAC3348"/>
<dbReference type="PATRIC" id="fig|272569.17.peg.3874"/>
<dbReference type="eggNOG" id="arCOG01027">
    <property type="taxonomic scope" value="Archaea"/>
</dbReference>
<dbReference type="HOGENOM" id="CLU_041243_1_1_2"/>
<dbReference type="UniPathway" id="UPA00050">
    <property type="reaction ID" value="UER00064"/>
</dbReference>
<dbReference type="Proteomes" id="UP000001169">
    <property type="component" value="Chromosome I"/>
</dbReference>
<dbReference type="GO" id="GO:0005737">
    <property type="term" value="C:cytoplasm"/>
    <property type="evidence" value="ECO:0007669"/>
    <property type="project" value="UniProtKB-SubCell"/>
</dbReference>
<dbReference type="GO" id="GO:0005524">
    <property type="term" value="F:ATP binding"/>
    <property type="evidence" value="ECO:0007669"/>
    <property type="project" value="UniProtKB-UniRule"/>
</dbReference>
<dbReference type="GO" id="GO:0004413">
    <property type="term" value="F:homoserine kinase activity"/>
    <property type="evidence" value="ECO:0007669"/>
    <property type="project" value="UniProtKB-UniRule"/>
</dbReference>
<dbReference type="GO" id="GO:0009088">
    <property type="term" value="P:threonine biosynthetic process"/>
    <property type="evidence" value="ECO:0007669"/>
    <property type="project" value="UniProtKB-UniRule"/>
</dbReference>
<dbReference type="Gene3D" id="3.30.230.10">
    <property type="match status" value="1"/>
</dbReference>
<dbReference type="Gene3D" id="3.30.70.890">
    <property type="entry name" value="GHMP kinase, C-terminal domain"/>
    <property type="match status" value="1"/>
</dbReference>
<dbReference type="HAMAP" id="MF_00384">
    <property type="entry name" value="Homoser_kinase"/>
    <property type="match status" value="1"/>
</dbReference>
<dbReference type="InterPro" id="IPR013750">
    <property type="entry name" value="GHMP_kinase_C_dom"/>
</dbReference>
<dbReference type="InterPro" id="IPR036554">
    <property type="entry name" value="GHMP_kinase_C_sf"/>
</dbReference>
<dbReference type="InterPro" id="IPR006204">
    <property type="entry name" value="GHMP_kinase_N_dom"/>
</dbReference>
<dbReference type="InterPro" id="IPR000870">
    <property type="entry name" value="Homoserine_kinase"/>
</dbReference>
<dbReference type="InterPro" id="IPR020568">
    <property type="entry name" value="Ribosomal_Su5_D2-typ_SF"/>
</dbReference>
<dbReference type="InterPro" id="IPR014721">
    <property type="entry name" value="Ribsml_uS5_D2-typ_fold_subgr"/>
</dbReference>
<dbReference type="NCBIfam" id="NF002288">
    <property type="entry name" value="PRK01212.1-4"/>
    <property type="match status" value="1"/>
</dbReference>
<dbReference type="NCBIfam" id="TIGR00191">
    <property type="entry name" value="thrB"/>
    <property type="match status" value="1"/>
</dbReference>
<dbReference type="PANTHER" id="PTHR20861:SF1">
    <property type="entry name" value="HOMOSERINE KINASE"/>
    <property type="match status" value="1"/>
</dbReference>
<dbReference type="PANTHER" id="PTHR20861">
    <property type="entry name" value="HOMOSERINE/4-DIPHOSPHOCYTIDYL-2-C-METHYL-D-ERYTHRITOL KINASE"/>
    <property type="match status" value="1"/>
</dbReference>
<dbReference type="Pfam" id="PF08544">
    <property type="entry name" value="GHMP_kinases_C"/>
    <property type="match status" value="1"/>
</dbReference>
<dbReference type="Pfam" id="PF00288">
    <property type="entry name" value="GHMP_kinases_N"/>
    <property type="match status" value="1"/>
</dbReference>
<dbReference type="PIRSF" id="PIRSF000676">
    <property type="entry name" value="Homoser_kin"/>
    <property type="match status" value="1"/>
</dbReference>
<dbReference type="PRINTS" id="PR00958">
    <property type="entry name" value="HOMSERKINASE"/>
</dbReference>
<dbReference type="SUPFAM" id="SSF55060">
    <property type="entry name" value="GHMP Kinase, C-terminal domain"/>
    <property type="match status" value="1"/>
</dbReference>
<dbReference type="SUPFAM" id="SSF54211">
    <property type="entry name" value="Ribosomal protein S5 domain 2-like"/>
    <property type="match status" value="1"/>
</dbReference>
<name>KHSE_HALMA</name>
<protein>
    <recommendedName>
        <fullName evidence="1">Homoserine kinase</fullName>
        <shortName evidence="1">HK</shortName>
        <shortName evidence="1">HSK</shortName>
        <ecNumber evidence="1">2.7.1.39</ecNumber>
    </recommendedName>
</protein>
<comment type="function">
    <text evidence="1">Catalyzes the ATP-dependent phosphorylation of L-homoserine to L-homoserine phosphate.</text>
</comment>
<comment type="catalytic activity">
    <reaction evidence="1">
        <text>L-homoserine + ATP = O-phospho-L-homoserine + ADP + H(+)</text>
        <dbReference type="Rhea" id="RHEA:13985"/>
        <dbReference type="ChEBI" id="CHEBI:15378"/>
        <dbReference type="ChEBI" id="CHEBI:30616"/>
        <dbReference type="ChEBI" id="CHEBI:57476"/>
        <dbReference type="ChEBI" id="CHEBI:57590"/>
        <dbReference type="ChEBI" id="CHEBI:456216"/>
        <dbReference type="EC" id="2.7.1.39"/>
    </reaction>
</comment>
<comment type="pathway">
    <text evidence="1">Amino-acid biosynthesis; L-threonine biosynthesis; L-threonine from L-aspartate: step 4/5.</text>
</comment>
<comment type="subcellular location">
    <subcellularLocation>
        <location evidence="1">Cytoplasm</location>
    </subcellularLocation>
</comment>
<comment type="similarity">
    <text evidence="1">Belongs to the GHMP kinase family. Homoserine kinase subfamily.</text>
</comment>
<comment type="sequence caution" evidence="2">
    <conflict type="erroneous initiation">
        <sequence resource="EMBL-CDS" id="AAV48039"/>
    </conflict>
</comment>
<reference key="1">
    <citation type="journal article" date="2004" name="Genome Res.">
        <title>Genome sequence of Haloarcula marismortui: a halophilic archaeon from the Dead Sea.</title>
        <authorList>
            <person name="Baliga N.S."/>
            <person name="Bonneau R."/>
            <person name="Facciotti M.T."/>
            <person name="Pan M."/>
            <person name="Glusman G."/>
            <person name="Deutsch E.W."/>
            <person name="Shannon P."/>
            <person name="Chiu Y."/>
            <person name="Weng R.S."/>
            <person name="Gan R.R."/>
            <person name="Hung P."/>
            <person name="Date S.V."/>
            <person name="Marcotte E."/>
            <person name="Hood L."/>
            <person name="Ng W.V."/>
        </authorList>
    </citation>
    <scope>NUCLEOTIDE SEQUENCE [LARGE SCALE GENOMIC DNA]</scope>
    <source>
        <strain>ATCC 43049 / DSM 3752 / JCM 8966 / VKM B-1809</strain>
    </source>
</reference>
<feature type="chain" id="PRO_0000156639" description="Homoserine kinase">
    <location>
        <begin position="1"/>
        <end position="291"/>
    </location>
</feature>
<feature type="binding site" evidence="1">
    <location>
        <begin position="80"/>
        <end position="90"/>
    </location>
    <ligand>
        <name>ATP</name>
        <dbReference type="ChEBI" id="CHEBI:30616"/>
    </ligand>
</feature>
<proteinExistence type="inferred from homology"/>
<organism>
    <name type="scientific">Haloarcula marismortui (strain ATCC 43049 / DSM 3752 / JCM 8966 / VKM B-1809)</name>
    <name type="common">Halobacterium marismortui</name>
    <dbReference type="NCBI Taxonomy" id="272569"/>
    <lineage>
        <taxon>Archaea</taxon>
        <taxon>Methanobacteriati</taxon>
        <taxon>Methanobacteriota</taxon>
        <taxon>Stenosarchaea group</taxon>
        <taxon>Halobacteria</taxon>
        <taxon>Halobacteriales</taxon>
        <taxon>Haloarculaceae</taxon>
        <taxon>Haloarcula</taxon>
    </lineage>
</organism>
<keyword id="KW-0028">Amino-acid biosynthesis</keyword>
<keyword id="KW-0067">ATP-binding</keyword>
<keyword id="KW-0963">Cytoplasm</keyword>
<keyword id="KW-0418">Kinase</keyword>
<keyword id="KW-0547">Nucleotide-binding</keyword>
<keyword id="KW-1185">Reference proteome</keyword>
<keyword id="KW-0791">Threonine biosynthesis</keyword>
<keyword id="KW-0808">Transferase</keyword>